<comment type="similarity">
    <text evidence="1">Belongs to the bacterial ribosomal protein bS16 family.</text>
</comment>
<evidence type="ECO:0000255" key="1">
    <source>
        <dbReference type="HAMAP-Rule" id="MF_00385"/>
    </source>
</evidence>
<evidence type="ECO:0000256" key="2">
    <source>
        <dbReference type="SAM" id="MobiDB-lite"/>
    </source>
</evidence>
<evidence type="ECO:0000305" key="3"/>
<protein>
    <recommendedName>
        <fullName evidence="1">Small ribosomal subunit protein bS16</fullName>
    </recommendedName>
    <alternativeName>
        <fullName evidence="3">30S ribosomal protein S16</fullName>
    </alternativeName>
</protein>
<feature type="chain" id="PRO_1000080148" description="Small ribosomal subunit protein bS16">
    <location>
        <begin position="1"/>
        <end position="130"/>
    </location>
</feature>
<feature type="region of interest" description="Disordered" evidence="2">
    <location>
        <begin position="82"/>
        <end position="130"/>
    </location>
</feature>
<feature type="compositionally biased region" description="Basic and acidic residues" evidence="2">
    <location>
        <begin position="99"/>
        <end position="110"/>
    </location>
</feature>
<feature type="compositionally biased region" description="Acidic residues" evidence="2">
    <location>
        <begin position="118"/>
        <end position="130"/>
    </location>
</feature>
<dbReference type="EMBL" id="CP000830">
    <property type="protein sequence ID" value="ABV92097.1"/>
    <property type="molecule type" value="Genomic_DNA"/>
</dbReference>
<dbReference type="RefSeq" id="WP_012177027.1">
    <property type="nucleotide sequence ID" value="NC_009952.1"/>
</dbReference>
<dbReference type="SMR" id="A8LMC0"/>
<dbReference type="STRING" id="398580.Dshi_0348"/>
<dbReference type="KEGG" id="dsh:Dshi_0348"/>
<dbReference type="eggNOG" id="COG0228">
    <property type="taxonomic scope" value="Bacteria"/>
</dbReference>
<dbReference type="HOGENOM" id="CLU_100590_3_1_5"/>
<dbReference type="OrthoDB" id="9807878at2"/>
<dbReference type="Proteomes" id="UP000006833">
    <property type="component" value="Chromosome"/>
</dbReference>
<dbReference type="GO" id="GO:0005737">
    <property type="term" value="C:cytoplasm"/>
    <property type="evidence" value="ECO:0007669"/>
    <property type="project" value="UniProtKB-ARBA"/>
</dbReference>
<dbReference type="GO" id="GO:0015935">
    <property type="term" value="C:small ribosomal subunit"/>
    <property type="evidence" value="ECO:0007669"/>
    <property type="project" value="TreeGrafter"/>
</dbReference>
<dbReference type="GO" id="GO:0003735">
    <property type="term" value="F:structural constituent of ribosome"/>
    <property type="evidence" value="ECO:0007669"/>
    <property type="project" value="InterPro"/>
</dbReference>
<dbReference type="GO" id="GO:0006412">
    <property type="term" value="P:translation"/>
    <property type="evidence" value="ECO:0007669"/>
    <property type="project" value="UniProtKB-UniRule"/>
</dbReference>
<dbReference type="Gene3D" id="3.30.1320.10">
    <property type="match status" value="1"/>
</dbReference>
<dbReference type="HAMAP" id="MF_00385">
    <property type="entry name" value="Ribosomal_bS16"/>
    <property type="match status" value="1"/>
</dbReference>
<dbReference type="InterPro" id="IPR000307">
    <property type="entry name" value="Ribosomal_bS16"/>
</dbReference>
<dbReference type="InterPro" id="IPR023803">
    <property type="entry name" value="Ribosomal_bS16_dom_sf"/>
</dbReference>
<dbReference type="NCBIfam" id="TIGR00002">
    <property type="entry name" value="S16"/>
    <property type="match status" value="1"/>
</dbReference>
<dbReference type="PANTHER" id="PTHR12919">
    <property type="entry name" value="30S RIBOSOMAL PROTEIN S16"/>
    <property type="match status" value="1"/>
</dbReference>
<dbReference type="PANTHER" id="PTHR12919:SF20">
    <property type="entry name" value="SMALL RIBOSOMAL SUBUNIT PROTEIN BS16M"/>
    <property type="match status" value="1"/>
</dbReference>
<dbReference type="Pfam" id="PF00886">
    <property type="entry name" value="Ribosomal_S16"/>
    <property type="match status" value="1"/>
</dbReference>
<dbReference type="SUPFAM" id="SSF54565">
    <property type="entry name" value="Ribosomal protein S16"/>
    <property type="match status" value="1"/>
</dbReference>
<organism>
    <name type="scientific">Dinoroseobacter shibae (strain DSM 16493 / NCIMB 14021 / DFL 12)</name>
    <dbReference type="NCBI Taxonomy" id="398580"/>
    <lineage>
        <taxon>Bacteria</taxon>
        <taxon>Pseudomonadati</taxon>
        <taxon>Pseudomonadota</taxon>
        <taxon>Alphaproteobacteria</taxon>
        <taxon>Rhodobacterales</taxon>
        <taxon>Roseobacteraceae</taxon>
        <taxon>Dinoroseobacter</taxon>
    </lineage>
</organism>
<sequence>MAMKIRLARGGSKKRPFYRIVAADSRMPRDGRFIEKLGTYNPLLPKDSEDRVKMDLERVQYWLGEGAKPTDRVARMLEAAEVLPKTERNNPKKAVPGKKAQDRAEEKAAKAAEASEAPADEAPAEEAAAE</sequence>
<reference key="1">
    <citation type="journal article" date="2010" name="ISME J.">
        <title>The complete genome sequence of the algal symbiont Dinoroseobacter shibae: a hitchhiker's guide to life in the sea.</title>
        <authorList>
            <person name="Wagner-Dobler I."/>
            <person name="Ballhausen B."/>
            <person name="Berger M."/>
            <person name="Brinkhoff T."/>
            <person name="Buchholz I."/>
            <person name="Bunk B."/>
            <person name="Cypionka H."/>
            <person name="Daniel R."/>
            <person name="Drepper T."/>
            <person name="Gerdts G."/>
            <person name="Hahnke S."/>
            <person name="Han C."/>
            <person name="Jahn D."/>
            <person name="Kalhoefer D."/>
            <person name="Kiss H."/>
            <person name="Klenk H.P."/>
            <person name="Kyrpides N."/>
            <person name="Liebl W."/>
            <person name="Liesegang H."/>
            <person name="Meincke L."/>
            <person name="Pati A."/>
            <person name="Petersen J."/>
            <person name="Piekarski T."/>
            <person name="Pommerenke C."/>
            <person name="Pradella S."/>
            <person name="Pukall R."/>
            <person name="Rabus R."/>
            <person name="Stackebrandt E."/>
            <person name="Thole S."/>
            <person name="Thompson L."/>
            <person name="Tielen P."/>
            <person name="Tomasch J."/>
            <person name="von Jan M."/>
            <person name="Wanphrut N."/>
            <person name="Wichels A."/>
            <person name="Zech H."/>
            <person name="Simon M."/>
        </authorList>
    </citation>
    <scope>NUCLEOTIDE SEQUENCE [LARGE SCALE GENOMIC DNA]</scope>
    <source>
        <strain>DSM 16493 / NCIMB 14021 / DFL 12</strain>
    </source>
</reference>
<accession>A8LMC0</accession>
<proteinExistence type="inferred from homology"/>
<name>RS16_DINSH</name>
<keyword id="KW-1185">Reference proteome</keyword>
<keyword id="KW-0687">Ribonucleoprotein</keyword>
<keyword id="KW-0689">Ribosomal protein</keyword>
<gene>
    <name evidence="1" type="primary">rpsP</name>
    <name type="ordered locus">Dshi_0348</name>
</gene>